<reference key="1">
    <citation type="journal article" date="2004" name="Nat. Genet.">
        <title>Evidence in the Legionella pneumophila genome for exploitation of host cell functions and high genome plasticity.</title>
        <authorList>
            <person name="Cazalet C."/>
            <person name="Rusniok C."/>
            <person name="Brueggemann H."/>
            <person name="Zidane N."/>
            <person name="Magnier A."/>
            <person name="Ma L."/>
            <person name="Tichit M."/>
            <person name="Jarraud S."/>
            <person name="Bouchier C."/>
            <person name="Vandenesch F."/>
            <person name="Kunst F."/>
            <person name="Etienne J."/>
            <person name="Glaser P."/>
            <person name="Buchrieser C."/>
        </authorList>
    </citation>
    <scope>NUCLEOTIDE SEQUENCE [LARGE SCALE GENOMIC DNA]</scope>
    <source>
        <strain>Lens</strain>
    </source>
</reference>
<organism>
    <name type="scientific">Legionella pneumophila (strain Lens)</name>
    <dbReference type="NCBI Taxonomy" id="297245"/>
    <lineage>
        <taxon>Bacteria</taxon>
        <taxon>Pseudomonadati</taxon>
        <taxon>Pseudomonadota</taxon>
        <taxon>Gammaproteobacteria</taxon>
        <taxon>Legionellales</taxon>
        <taxon>Legionellaceae</taxon>
        <taxon>Legionella</taxon>
    </lineage>
</organism>
<feature type="chain" id="PRO_0000181109" description="Large ribosomal subunit protein bL27">
    <location>
        <begin position="1"/>
        <end position="92"/>
    </location>
</feature>
<feature type="region of interest" description="Disordered" evidence="2">
    <location>
        <begin position="1"/>
        <end position="20"/>
    </location>
</feature>
<name>RL27_LEGPL</name>
<gene>
    <name evidence="1" type="primary">rpmA</name>
    <name type="ordered locus">lpl2575</name>
</gene>
<comment type="similarity">
    <text evidence="1">Belongs to the bacterial ribosomal protein bL27 family.</text>
</comment>
<proteinExistence type="inferred from homology"/>
<dbReference type="EMBL" id="CR628337">
    <property type="protein sequence ID" value="CAH16816.1"/>
    <property type="molecule type" value="Genomic_DNA"/>
</dbReference>
<dbReference type="RefSeq" id="WP_010948350.1">
    <property type="nucleotide sequence ID" value="NC_006369.1"/>
</dbReference>
<dbReference type="SMR" id="Q5WTF0"/>
<dbReference type="GeneID" id="57036649"/>
<dbReference type="KEGG" id="lpf:lpl2575"/>
<dbReference type="LegioList" id="lpl2575"/>
<dbReference type="HOGENOM" id="CLU_095424_4_1_6"/>
<dbReference type="Proteomes" id="UP000002517">
    <property type="component" value="Chromosome"/>
</dbReference>
<dbReference type="GO" id="GO:0022625">
    <property type="term" value="C:cytosolic large ribosomal subunit"/>
    <property type="evidence" value="ECO:0007669"/>
    <property type="project" value="TreeGrafter"/>
</dbReference>
<dbReference type="GO" id="GO:0003735">
    <property type="term" value="F:structural constituent of ribosome"/>
    <property type="evidence" value="ECO:0007669"/>
    <property type="project" value="InterPro"/>
</dbReference>
<dbReference type="GO" id="GO:0006412">
    <property type="term" value="P:translation"/>
    <property type="evidence" value="ECO:0007669"/>
    <property type="project" value="UniProtKB-UniRule"/>
</dbReference>
<dbReference type="FunFam" id="2.40.50.100:FF:000001">
    <property type="entry name" value="50S ribosomal protein L27"/>
    <property type="match status" value="1"/>
</dbReference>
<dbReference type="Gene3D" id="2.40.50.100">
    <property type="match status" value="1"/>
</dbReference>
<dbReference type="HAMAP" id="MF_00539">
    <property type="entry name" value="Ribosomal_bL27"/>
    <property type="match status" value="1"/>
</dbReference>
<dbReference type="InterPro" id="IPR001684">
    <property type="entry name" value="Ribosomal_bL27"/>
</dbReference>
<dbReference type="InterPro" id="IPR018261">
    <property type="entry name" value="Ribosomal_bL27_CS"/>
</dbReference>
<dbReference type="NCBIfam" id="TIGR00062">
    <property type="entry name" value="L27"/>
    <property type="match status" value="1"/>
</dbReference>
<dbReference type="PANTHER" id="PTHR15893:SF0">
    <property type="entry name" value="LARGE RIBOSOMAL SUBUNIT PROTEIN BL27M"/>
    <property type="match status" value="1"/>
</dbReference>
<dbReference type="PANTHER" id="PTHR15893">
    <property type="entry name" value="RIBOSOMAL PROTEIN L27"/>
    <property type="match status" value="1"/>
</dbReference>
<dbReference type="Pfam" id="PF01016">
    <property type="entry name" value="Ribosomal_L27"/>
    <property type="match status" value="1"/>
</dbReference>
<dbReference type="PRINTS" id="PR00063">
    <property type="entry name" value="RIBOSOMALL27"/>
</dbReference>
<dbReference type="SUPFAM" id="SSF110324">
    <property type="entry name" value="Ribosomal L27 protein-like"/>
    <property type="match status" value="1"/>
</dbReference>
<dbReference type="PROSITE" id="PS00831">
    <property type="entry name" value="RIBOSOMAL_L27"/>
    <property type="match status" value="1"/>
</dbReference>
<accession>Q5WTF0</accession>
<keyword id="KW-0687">Ribonucleoprotein</keyword>
<keyword id="KW-0689">Ribosomal protein</keyword>
<protein>
    <recommendedName>
        <fullName evidence="1">Large ribosomal subunit protein bL27</fullName>
    </recommendedName>
    <alternativeName>
        <fullName evidence="3">50S ribosomal protein L27</fullName>
    </alternativeName>
</protein>
<evidence type="ECO:0000255" key="1">
    <source>
        <dbReference type="HAMAP-Rule" id="MF_00539"/>
    </source>
</evidence>
<evidence type="ECO:0000256" key="2">
    <source>
        <dbReference type="SAM" id="MobiDB-lite"/>
    </source>
</evidence>
<evidence type="ECO:0000305" key="3"/>
<sequence>MAHKKAGGSTRNGRDSNPKYLGVKRFGGQFVNAGEIIVRQRGTRFHPGPGVGCGRDHTLYALVEGLVQFTTKGEKNRKYVTILPEQREEAAS</sequence>